<sequence>MLDNALLGLTHEQQQEAVEKIQQLMAEGMSSGEAIAFVAQELRQKQQKLNNTHS</sequence>
<proteinExistence type="inferred from homology"/>
<feature type="chain" id="PRO_0000216198" description="UPF0181 protein PM0480">
    <location>
        <begin position="1"/>
        <end position="54"/>
    </location>
</feature>
<dbReference type="EMBL" id="AE004439">
    <property type="protein sequence ID" value="AAK02564.1"/>
    <property type="molecule type" value="Genomic_DNA"/>
</dbReference>
<dbReference type="RefSeq" id="WP_005726226.1">
    <property type="nucleotide sequence ID" value="NC_002663.1"/>
</dbReference>
<dbReference type="SMR" id="Q9CNF2"/>
<dbReference type="STRING" id="272843.PM0480"/>
<dbReference type="EnsemblBacteria" id="AAK02564">
    <property type="protein sequence ID" value="AAK02564"/>
    <property type="gene ID" value="PM0480"/>
</dbReference>
<dbReference type="KEGG" id="pmu:PM0480"/>
<dbReference type="HOGENOM" id="CLU_185263_1_1_6"/>
<dbReference type="OrthoDB" id="6522084at2"/>
<dbReference type="Proteomes" id="UP000000809">
    <property type="component" value="Chromosome"/>
</dbReference>
<dbReference type="HAMAP" id="MF_00507">
    <property type="entry name" value="UPF0181"/>
    <property type="match status" value="1"/>
</dbReference>
<dbReference type="InterPro" id="IPR005371">
    <property type="entry name" value="UPF0181"/>
</dbReference>
<dbReference type="NCBIfam" id="NF003476">
    <property type="entry name" value="PRK05114.1"/>
    <property type="match status" value="1"/>
</dbReference>
<dbReference type="Pfam" id="PF03701">
    <property type="entry name" value="UPF0181"/>
    <property type="match status" value="1"/>
</dbReference>
<name>Y480_PASMU</name>
<comment type="similarity">
    <text evidence="1">Belongs to the UPF0181 family.</text>
</comment>
<accession>Q9CNF2</accession>
<organism>
    <name type="scientific">Pasteurella multocida (strain Pm70)</name>
    <dbReference type="NCBI Taxonomy" id="272843"/>
    <lineage>
        <taxon>Bacteria</taxon>
        <taxon>Pseudomonadati</taxon>
        <taxon>Pseudomonadota</taxon>
        <taxon>Gammaproteobacteria</taxon>
        <taxon>Pasteurellales</taxon>
        <taxon>Pasteurellaceae</taxon>
        <taxon>Pasteurella</taxon>
    </lineage>
</organism>
<reference key="1">
    <citation type="journal article" date="2001" name="Proc. Natl. Acad. Sci. U.S.A.">
        <title>Complete genomic sequence of Pasteurella multocida Pm70.</title>
        <authorList>
            <person name="May B.J."/>
            <person name="Zhang Q."/>
            <person name="Li L.L."/>
            <person name="Paustian M.L."/>
            <person name="Whittam T.S."/>
            <person name="Kapur V."/>
        </authorList>
    </citation>
    <scope>NUCLEOTIDE SEQUENCE [LARGE SCALE GENOMIC DNA]</scope>
    <source>
        <strain>Pm70</strain>
    </source>
</reference>
<evidence type="ECO:0000255" key="1">
    <source>
        <dbReference type="HAMAP-Rule" id="MF_00507"/>
    </source>
</evidence>
<gene>
    <name type="ordered locus">PM0480</name>
</gene>
<protein>
    <recommendedName>
        <fullName evidence="1">UPF0181 protein PM0480</fullName>
    </recommendedName>
</protein>
<keyword id="KW-1185">Reference proteome</keyword>